<comment type="function">
    <text evidence="1">Necessary for efficient RNA polymerase transcription elongation past template-encoded arresting sites. The arresting sites in DNA have the property of trapping a certain fraction of elongating RNA polymerases that pass through, resulting in locked ternary complexes. Cleavage of the nascent transcript by cleavage factors such as GreA or GreB allows the resumption of elongation from the new 3'terminus. GreA releases sequences of 2 to 3 nucleotides.</text>
</comment>
<comment type="similarity">
    <text evidence="1">Belongs to the GreA/GreB family.</text>
</comment>
<accession>A9M6H1</accession>
<organism>
    <name type="scientific">Brucella canis (strain ATCC 23365 / NCTC 10854 / RM-666)</name>
    <dbReference type="NCBI Taxonomy" id="483179"/>
    <lineage>
        <taxon>Bacteria</taxon>
        <taxon>Pseudomonadati</taxon>
        <taxon>Pseudomonadota</taxon>
        <taxon>Alphaproteobacteria</taxon>
        <taxon>Hyphomicrobiales</taxon>
        <taxon>Brucellaceae</taxon>
        <taxon>Brucella/Ochrobactrum group</taxon>
        <taxon>Brucella</taxon>
    </lineage>
</organism>
<dbReference type="EMBL" id="CP000872">
    <property type="protein sequence ID" value="ABX62567.1"/>
    <property type="molecule type" value="Genomic_DNA"/>
</dbReference>
<dbReference type="RefSeq" id="WP_002964610.1">
    <property type="nucleotide sequence ID" value="NC_010103.1"/>
</dbReference>
<dbReference type="SMR" id="A9M6H1"/>
<dbReference type="GeneID" id="93016210"/>
<dbReference type="KEGG" id="bcs:BCAN_A1541"/>
<dbReference type="HOGENOM" id="CLU_101379_2_0_5"/>
<dbReference type="Proteomes" id="UP000001385">
    <property type="component" value="Chromosome I"/>
</dbReference>
<dbReference type="GO" id="GO:0003677">
    <property type="term" value="F:DNA binding"/>
    <property type="evidence" value="ECO:0007669"/>
    <property type="project" value="UniProtKB-UniRule"/>
</dbReference>
<dbReference type="GO" id="GO:0070063">
    <property type="term" value="F:RNA polymerase binding"/>
    <property type="evidence" value="ECO:0007669"/>
    <property type="project" value="InterPro"/>
</dbReference>
<dbReference type="GO" id="GO:0006354">
    <property type="term" value="P:DNA-templated transcription elongation"/>
    <property type="evidence" value="ECO:0007669"/>
    <property type="project" value="TreeGrafter"/>
</dbReference>
<dbReference type="GO" id="GO:0032784">
    <property type="term" value="P:regulation of DNA-templated transcription elongation"/>
    <property type="evidence" value="ECO:0007669"/>
    <property type="project" value="UniProtKB-UniRule"/>
</dbReference>
<dbReference type="FunFam" id="1.10.287.180:FF:000001">
    <property type="entry name" value="Transcription elongation factor GreA"/>
    <property type="match status" value="1"/>
</dbReference>
<dbReference type="FunFam" id="3.10.50.30:FF:000001">
    <property type="entry name" value="Transcription elongation factor GreA"/>
    <property type="match status" value="1"/>
</dbReference>
<dbReference type="Gene3D" id="3.10.50.30">
    <property type="entry name" value="Transcription elongation factor, GreA/GreB, C-terminal domain"/>
    <property type="match status" value="1"/>
</dbReference>
<dbReference type="Gene3D" id="1.10.287.180">
    <property type="entry name" value="Transcription elongation factor, GreA/GreB, N-terminal domain"/>
    <property type="match status" value="1"/>
</dbReference>
<dbReference type="HAMAP" id="MF_00105">
    <property type="entry name" value="GreA_GreB"/>
    <property type="match status" value="1"/>
</dbReference>
<dbReference type="InterPro" id="IPR036953">
    <property type="entry name" value="GreA/GreB_C_sf"/>
</dbReference>
<dbReference type="InterPro" id="IPR018151">
    <property type="entry name" value="TF_GreA/GreB_CS"/>
</dbReference>
<dbReference type="InterPro" id="IPR006359">
    <property type="entry name" value="Tscrpt_elong_fac_GreA"/>
</dbReference>
<dbReference type="InterPro" id="IPR028624">
    <property type="entry name" value="Tscrpt_elong_fac_GreA/B"/>
</dbReference>
<dbReference type="InterPro" id="IPR001437">
    <property type="entry name" value="Tscrpt_elong_fac_GreA/B_C"/>
</dbReference>
<dbReference type="InterPro" id="IPR023459">
    <property type="entry name" value="Tscrpt_elong_fac_GreA/B_fam"/>
</dbReference>
<dbReference type="InterPro" id="IPR022691">
    <property type="entry name" value="Tscrpt_elong_fac_GreA/B_N"/>
</dbReference>
<dbReference type="InterPro" id="IPR036805">
    <property type="entry name" value="Tscrpt_elong_fac_GreA/B_N_sf"/>
</dbReference>
<dbReference type="NCBIfam" id="TIGR01462">
    <property type="entry name" value="greA"/>
    <property type="match status" value="1"/>
</dbReference>
<dbReference type="NCBIfam" id="NF001261">
    <property type="entry name" value="PRK00226.1-2"/>
    <property type="match status" value="1"/>
</dbReference>
<dbReference type="NCBIfam" id="NF001263">
    <property type="entry name" value="PRK00226.1-4"/>
    <property type="match status" value="1"/>
</dbReference>
<dbReference type="NCBIfam" id="NF001264">
    <property type="entry name" value="PRK00226.1-5"/>
    <property type="match status" value="1"/>
</dbReference>
<dbReference type="PANTHER" id="PTHR30437">
    <property type="entry name" value="TRANSCRIPTION ELONGATION FACTOR GREA"/>
    <property type="match status" value="1"/>
</dbReference>
<dbReference type="PANTHER" id="PTHR30437:SF4">
    <property type="entry name" value="TRANSCRIPTION ELONGATION FACTOR GREA"/>
    <property type="match status" value="1"/>
</dbReference>
<dbReference type="Pfam" id="PF01272">
    <property type="entry name" value="GreA_GreB"/>
    <property type="match status" value="1"/>
</dbReference>
<dbReference type="Pfam" id="PF03449">
    <property type="entry name" value="GreA_GreB_N"/>
    <property type="match status" value="1"/>
</dbReference>
<dbReference type="PIRSF" id="PIRSF006092">
    <property type="entry name" value="GreA_GreB"/>
    <property type="match status" value="1"/>
</dbReference>
<dbReference type="SUPFAM" id="SSF54534">
    <property type="entry name" value="FKBP-like"/>
    <property type="match status" value="1"/>
</dbReference>
<dbReference type="SUPFAM" id="SSF46557">
    <property type="entry name" value="GreA transcript cleavage protein, N-terminal domain"/>
    <property type="match status" value="1"/>
</dbReference>
<dbReference type="PROSITE" id="PS00829">
    <property type="entry name" value="GREAB_1"/>
    <property type="match status" value="1"/>
</dbReference>
<dbReference type="PROSITE" id="PS00830">
    <property type="entry name" value="GREAB_2"/>
    <property type="match status" value="1"/>
</dbReference>
<protein>
    <recommendedName>
        <fullName evidence="1">Transcription elongation factor GreA</fullName>
    </recommendedName>
    <alternativeName>
        <fullName evidence="1">Transcript cleavage factor GreA</fullName>
    </alternativeName>
</protein>
<proteinExistence type="inferred from homology"/>
<feature type="chain" id="PRO_1000075867" description="Transcription elongation factor GreA">
    <location>
        <begin position="1"/>
        <end position="157"/>
    </location>
</feature>
<sequence>MEKFPMTPRGFEKLKEELRWRQQSERPRIIEAIAEARAHGDLSENAEYHAAKEAQSLNEGRINELEDLVARAEVIDVSKLTGDRIKFGATVTMIDEDTEEEKIYQIVGDQEADVKEGRISISSPIARALIGKGEGDTIEVNAPGGSRSYEIIALKFV</sequence>
<name>GREA_BRUC2</name>
<gene>
    <name evidence="1" type="primary">greA</name>
    <name type="ordered locus">BCAN_A1541</name>
</gene>
<reference key="1">
    <citation type="submission" date="2007-10" db="EMBL/GenBank/DDBJ databases">
        <title>Brucella canis ATCC 23365 whole genome shotgun sequencing project.</title>
        <authorList>
            <person name="Setubal J.C."/>
            <person name="Bowns C."/>
            <person name="Boyle S."/>
            <person name="Crasta O.R."/>
            <person name="Czar M.J."/>
            <person name="Dharmanolla C."/>
            <person name="Gillespie J.J."/>
            <person name="Kenyon R.W."/>
            <person name="Lu J."/>
            <person name="Mane S."/>
            <person name="Mohapatra S."/>
            <person name="Nagrani S."/>
            <person name="Purkayastha A."/>
            <person name="Rajasimha H.K."/>
            <person name="Shallom J.M."/>
            <person name="Shallom S."/>
            <person name="Shukla M."/>
            <person name="Snyder E.E."/>
            <person name="Sobral B.W."/>
            <person name="Wattam A.R."/>
            <person name="Will R."/>
            <person name="Williams K."/>
            <person name="Yoo H."/>
            <person name="Bruce D."/>
            <person name="Detter C."/>
            <person name="Munk C."/>
            <person name="Brettin T.S."/>
        </authorList>
    </citation>
    <scope>NUCLEOTIDE SEQUENCE [LARGE SCALE GENOMIC DNA]</scope>
    <source>
        <strain>ATCC 23365 / NCTC 10854 / RM-666</strain>
    </source>
</reference>
<evidence type="ECO:0000255" key="1">
    <source>
        <dbReference type="HAMAP-Rule" id="MF_00105"/>
    </source>
</evidence>
<keyword id="KW-0238">DNA-binding</keyword>
<keyword id="KW-1185">Reference proteome</keyword>
<keyword id="KW-0804">Transcription</keyword>
<keyword id="KW-0805">Transcription regulation</keyword>